<organism>
    <name type="scientific">Telmatactis stephensoni</name>
    <name type="common">Sea anemone</name>
    <dbReference type="NCBI Taxonomy" id="2835637"/>
    <lineage>
        <taxon>Eukaryota</taxon>
        <taxon>Metazoa</taxon>
        <taxon>Cnidaria</taxon>
        <taxon>Anthozoa</taxon>
        <taxon>Hexacorallia</taxon>
        <taxon>Actiniaria</taxon>
        <taxon>Isophelliidae</taxon>
        <taxon>Telmatactis</taxon>
    </lineage>
</organism>
<proteinExistence type="evidence at protein level"/>
<protein>
    <recommendedName>
        <fullName evidence="4">Kappa-isophellitoxin-Tst1a</fullName>
        <shortName evidence="4">Kappa-IPTX-Tst1a</shortName>
    </recommendedName>
    <alternativeName>
        <fullName evidence="3">ShKT-Ts1</fullName>
    </alternativeName>
</protein>
<keyword id="KW-0002">3D-structure</keyword>
<keyword id="KW-1015">Disulfide bond</keyword>
<keyword id="KW-0166">Nematocyst</keyword>
<keyword id="KW-0964">Secreted</keyword>
<keyword id="KW-0800">Toxin</keyword>
<dbReference type="PDB" id="8SED">
    <property type="method" value="NMR"/>
    <property type="chains" value="A=1-36"/>
</dbReference>
<dbReference type="PDBsum" id="8SED"/>
<dbReference type="InterPro" id="IPR003582">
    <property type="entry name" value="ShKT_dom"/>
</dbReference>
<dbReference type="Pfam" id="PF01549">
    <property type="entry name" value="ShK"/>
    <property type="match status" value="1"/>
</dbReference>
<dbReference type="SUPFAM" id="SSF57546">
    <property type="entry name" value="Crisp domain-like"/>
    <property type="match status" value="1"/>
</dbReference>
<dbReference type="PROSITE" id="PS51670">
    <property type="entry name" value="SHKT"/>
    <property type="match status" value="1"/>
</dbReference>
<name>K1A_TELST</name>
<reference key="1">
    <citation type="journal article" date="2022" name="Mol. Ecol.">
        <title>Venoms for all occasions: the functional toxin profiles of different anatomical regions in sea anemones are related to their ecological function.</title>
        <authorList>
            <person name="Ashwood L.M."/>
            <person name="Undheim E.A.B."/>
            <person name="Madio B."/>
            <person name="Hamilton B.R."/>
            <person name="Daly M."/>
            <person name="Hurwood D.A."/>
            <person name="King G.F."/>
            <person name="Prentis P.J."/>
        </authorList>
    </citation>
    <scope>NUCLEOTIDE SEQUENCE [LARGE SCALE MRNA]</scope>
</reference>
<reference key="2">
    <citation type="journal article" date="2024" name="Proteins">
        <title>Structure-function relationships in ShKT domain peptides: ShKT-Ts1 from the sea anemone Telmatactis stephensoni.</title>
        <authorList>
            <person name="Sanches K."/>
            <person name="Ashwood L.M."/>
            <person name="Olushola-Siedoks A.A."/>
            <person name="Wai D.C.C."/>
            <person name="Rahman A."/>
            <person name="Shakeel K."/>
            <person name="Naseem M.U."/>
            <person name="Panyi G."/>
            <person name="Prentis P.J."/>
            <person name="Norton R.S."/>
        </authorList>
    </citation>
    <scope>STRUCTURE BY NMR</scope>
    <scope>RECOMBINANT EXPRESSION</scope>
    <scope>DISULFIDE BONDS</scope>
    <scope>IDENTIFICATION BY MASS SPECTROMETRY</scope>
    <scope>SUBCELLULAR LOCATION</scope>
    <scope>TISSUE SPECIFICITY</scope>
    <scope>MOLECULAR DYNAMICS SIMULATIONS</scope>
</reference>
<accession>P0DRH8</accession>
<evidence type="ECO:0000255" key="1">
    <source>
        <dbReference type="PROSITE-ProRule" id="PRU01005"/>
    </source>
</evidence>
<evidence type="ECO:0000269" key="2">
    <source>
    </source>
</evidence>
<evidence type="ECO:0000303" key="3">
    <source>
    </source>
</evidence>
<evidence type="ECO:0000305" key="4"/>
<evidence type="ECO:0000305" key="5">
    <source>
    </source>
</evidence>
<evidence type="ECO:0007744" key="6">
    <source>
        <dbReference type="PDB" id="8SED"/>
    </source>
</evidence>
<comment type="function">
    <text evidence="2 4">Probable toxin with unknown function (Probable). Does not inhibit all channels tested. Is not cytotoxic on macrophage (PubMed:37794633).</text>
</comment>
<comment type="subcellular location">
    <subcellularLocation>
        <location evidence="5">Secreted</location>
    </subcellularLocation>
    <subcellularLocation>
        <location evidence="4">Nematocyst</location>
    </subcellularLocation>
</comment>
<comment type="tissue specificity">
    <text evidence="2">Predominantly expressed in mesenterial filaments (at protein level), a morphological structure that has a functional role in prey killing and digestion. Also expressed in club-tips, tentacles, actinopharynx, body column, mesenterial filaments and pedal disk.</text>
</comment>
<comment type="miscellaneous">
    <text evidence="2">Negative results: does not inhibit human voltage-gated potassium channels Kv1.1/KCNA1, Kv1.2/KCNA2, Kv1.3/KCNA3, Kv1.4/KCNA4, Kv1.5/KCNA5, Kv1.6/KCNA6, mouse KCa1.1/KCNMA1/BK, human KCa3.1/KCNN4/IK/SK4, and human voltage-gated sodium channels Nav1.4/SCN4A and Nav1.5/SCN5A.</text>
</comment>
<comment type="miscellaneous">
    <text evidence="5">The recombinant peptide, on which all structural and functional characterization was conducted, contains an additional N-terminal Gly relative to the native ShKT-Ts1 sequence.</text>
</comment>
<comment type="similarity">
    <text evidence="4">Belongs to the sea anemone type 1 potassium channel toxin family. Type 1a subfamily.</text>
</comment>
<comment type="online information" name="National Center for Biotechnology Information (NCBI)">
    <link uri="https://www.ncbi.nlm.nih.gov/sra/?term=PRJNA728752."/>
</comment>
<comment type="online information" name="Biological Magnetic Resonance Data Bank">
    <link uri="https://bmrb.io/data_library/summary/index.php?bmrbId=51896"/>
</comment>
<feature type="chain" id="PRO_0000461948" description="Kappa-isophellitoxin-Tst1a" evidence="5">
    <location>
        <begin position="1"/>
        <end position="36"/>
    </location>
</feature>
<feature type="domain" description="ShKT" evidence="1">
    <location>
        <begin position="2"/>
        <end position="36"/>
    </location>
</feature>
<feature type="site" description="Buried residue in the protein structure. This inaccessibility may explain the lack of activity against ion channels" evidence="2">
    <location>
        <position position="24"/>
    </location>
</feature>
<feature type="disulfide bond" evidence="2 6">
    <location>
        <begin position="2"/>
        <end position="36"/>
    </location>
</feature>
<feature type="disulfide bond" evidence="2 6">
    <location>
        <begin position="11"/>
        <end position="29"/>
    </location>
</feature>
<feature type="disulfide bond" evidence="2 6">
    <location>
        <begin position="18"/>
        <end position="33"/>
    </location>
</feature>
<sequence length="36" mass="4179">ACENNFSDRECERRKKDCDSSMKFRELSCPKTCGTC</sequence>